<gene>
    <name type="primary">minC</name>
    <name type="ordered locus">b1176</name>
    <name type="ordered locus">JW1165</name>
</gene>
<accession>P18196</accession>
<comment type="function">
    <text evidence="2">Cell division inhibitor that blocks the formation of polar Z ring septums. Rapidly oscillates between the poles of the cell to destabilize FtsZ filaments that have formed before they mature into polar Z rings. Prevents FtsZ polymerization.</text>
</comment>
<comment type="subunit">
    <text>Interacts with MinD and FtsZ; homodimer.</text>
</comment>
<comment type="interaction">
    <interactant intactId="EBI-554060">
        <id>P18196</id>
    </interactant>
    <interactant intactId="EBI-8767793">
        <id>P0AEJ8</id>
        <label>eutN</label>
    </interactant>
    <organismsDiffer>false</organismsDiffer>
    <experiments>3</experiments>
</comment>
<comment type="interaction">
    <interactant intactId="EBI-554060">
        <id>P18196</id>
    </interactant>
    <interactant intactId="EBI-554045">
        <id>P00946</id>
        <label>manA</label>
    </interactant>
    <organismsDiffer>false</organismsDiffer>
    <experiments>5</experiments>
</comment>
<comment type="interaction">
    <interactant intactId="EBI-554060">
        <id>P18196</id>
    </interactant>
    <interactant intactId="EBI-554545">
        <id>P0AEZ3</id>
        <label>minD</label>
    </interactant>
    <organismsDiffer>false</organismsDiffer>
    <experiments>7</experiments>
</comment>
<comment type="interaction">
    <interactant intactId="EBI-554060">
        <id>P18196</id>
    </interactant>
    <interactant intactId="EBI-9132384">
        <id>P39409</id>
        <label>yjjW</label>
    </interactant>
    <organismsDiffer>false</organismsDiffer>
    <experiments>2</experiments>
</comment>
<comment type="disruption phenotype">
    <text evidence="2">In a minCDE operon disruption (minC-minD-minE), cells divide not only at midpoint but also at their poles, yielding small minicells and long rods. Loss of polar localization of several polar-localized proteins including GroEL-GroES, TnaA and YqjD.</text>
</comment>
<comment type="similarity">
    <text evidence="3">Belongs to the MinC family.</text>
</comment>
<organism>
    <name type="scientific">Escherichia coli (strain K12)</name>
    <dbReference type="NCBI Taxonomy" id="83333"/>
    <lineage>
        <taxon>Bacteria</taxon>
        <taxon>Pseudomonadati</taxon>
        <taxon>Pseudomonadota</taxon>
        <taxon>Gammaproteobacteria</taxon>
        <taxon>Enterobacterales</taxon>
        <taxon>Enterobacteriaceae</taxon>
        <taxon>Escherichia</taxon>
    </lineage>
</organism>
<reference key="1">
    <citation type="journal article" date="1989" name="Cell">
        <title>A division inhibitor and a topological specificity factor coded for by the minicell locus determine proper placement of the division septum in E. coli.</title>
        <authorList>
            <person name="de Boer P.A.J."/>
            <person name="Crossley R.E."/>
            <person name="Rothfield L.I."/>
        </authorList>
    </citation>
    <scope>NUCLEOTIDE SEQUENCE [GENOMIC DNA]</scope>
</reference>
<reference key="2">
    <citation type="journal article" date="1996" name="DNA Res.">
        <title>A 718-kb DNA sequence of the Escherichia coli K-12 genome corresponding to the 12.7-28.0 min region on the linkage map.</title>
        <authorList>
            <person name="Oshima T."/>
            <person name="Aiba H."/>
            <person name="Baba T."/>
            <person name="Fujita K."/>
            <person name="Hayashi K."/>
            <person name="Honjo A."/>
            <person name="Ikemoto K."/>
            <person name="Inada T."/>
            <person name="Itoh T."/>
            <person name="Kajihara M."/>
            <person name="Kanai K."/>
            <person name="Kashimoto K."/>
            <person name="Kimura S."/>
            <person name="Kitagawa M."/>
            <person name="Makino K."/>
            <person name="Masuda S."/>
            <person name="Miki T."/>
            <person name="Mizobuchi K."/>
            <person name="Mori H."/>
            <person name="Motomura K."/>
            <person name="Nakamura Y."/>
            <person name="Nashimoto H."/>
            <person name="Nishio Y."/>
            <person name="Saito N."/>
            <person name="Sampei G."/>
            <person name="Seki Y."/>
            <person name="Tagami H."/>
            <person name="Takemoto K."/>
            <person name="Wada C."/>
            <person name="Yamamoto Y."/>
            <person name="Yano M."/>
            <person name="Horiuchi T."/>
        </authorList>
    </citation>
    <scope>NUCLEOTIDE SEQUENCE [LARGE SCALE GENOMIC DNA]</scope>
    <source>
        <strain>K12 / W3110 / ATCC 27325 / DSM 5911</strain>
    </source>
</reference>
<reference key="3">
    <citation type="journal article" date="1997" name="Science">
        <title>The complete genome sequence of Escherichia coli K-12.</title>
        <authorList>
            <person name="Blattner F.R."/>
            <person name="Plunkett G. III"/>
            <person name="Bloch C.A."/>
            <person name="Perna N.T."/>
            <person name="Burland V."/>
            <person name="Riley M."/>
            <person name="Collado-Vides J."/>
            <person name="Glasner J.D."/>
            <person name="Rode C.K."/>
            <person name="Mayhew G.F."/>
            <person name="Gregor J."/>
            <person name="Davis N.W."/>
            <person name="Kirkpatrick H.A."/>
            <person name="Goeden M.A."/>
            <person name="Rose D.J."/>
            <person name="Mau B."/>
            <person name="Shao Y."/>
        </authorList>
    </citation>
    <scope>NUCLEOTIDE SEQUENCE [LARGE SCALE GENOMIC DNA]</scope>
    <source>
        <strain>K12 / MG1655 / ATCC 47076</strain>
    </source>
</reference>
<reference key="4">
    <citation type="journal article" date="2006" name="Mol. Syst. Biol.">
        <title>Highly accurate genome sequences of Escherichia coli K-12 strains MG1655 and W3110.</title>
        <authorList>
            <person name="Hayashi K."/>
            <person name="Morooka N."/>
            <person name="Yamamoto Y."/>
            <person name="Fujita K."/>
            <person name="Isono K."/>
            <person name="Choi S."/>
            <person name="Ohtsubo E."/>
            <person name="Baba T."/>
            <person name="Wanner B.L."/>
            <person name="Mori H."/>
            <person name="Horiuchi T."/>
        </authorList>
    </citation>
    <scope>NUCLEOTIDE SEQUENCE [LARGE SCALE GENOMIC DNA]</scope>
    <source>
        <strain>K12 / W3110 / ATCC 27325 / DSM 5911</strain>
    </source>
</reference>
<reference key="5">
    <citation type="journal article" date="1999" name="Proc. Natl. Acad. Sci. U.S.A.">
        <title>The MinC component of the division site selection system in Escherichia coli interacts with FtsZ to prevent polymerization.</title>
        <authorList>
            <person name="Hu Z."/>
            <person name="Mukherjee A."/>
            <person name="Pichoff S."/>
            <person name="Lutkenhaus J."/>
        </authorList>
    </citation>
    <scope>CHARACTERIZATION</scope>
</reference>
<reference key="6">
    <citation type="journal article" date="2000" name="J. Bacteriol.">
        <title>Analysis of MinC reveals two independent domains involved in interaction with MinD and FtsZ.</title>
        <authorList>
            <person name="Hu Z."/>
            <person name="Lutkenhaus J."/>
        </authorList>
    </citation>
    <scope>CHARACTERIZATION</scope>
</reference>
<reference key="7">
    <citation type="journal article" date="2012" name="Mol. Microbiol.">
        <title>Isolation and identification of new inner membrane-associated proteins that localize to cell poles in Escherichia coli.</title>
        <authorList>
            <person name="Li G."/>
            <person name="Young K.D."/>
        </authorList>
    </citation>
    <scope>FUNCTION IN LOCATION AT CELL POLES</scope>
    <scope>DISRUPTION PHENOTYPE</scope>
    <source>
        <strain>K12 / MG1655 / ATCC 47076</strain>
    </source>
</reference>
<protein>
    <recommendedName>
        <fullName>Septum site-determining protein MinC</fullName>
    </recommendedName>
</protein>
<sequence length="231" mass="24776">MSNTPIELKGSSFTLSVVHLHEAEPKVIHQALEDKIAQAPAFLKHAPVVLNVSALEDPVNWSAMHKAVSATGLRVIGVSGCKDAQLKAEIEKMGLPILTEGKEKAPRPAPTPQAPAQNTTPVTKTRLIDTPVRSGQRIYAPQCDLIVTSHVSAGAELIADGNIHVYGMMRGRALAGASGDRETQIFCTNLMAELVSIAGEYWLSDQIPAEFYGKAARLQLVENALTVQPLN</sequence>
<dbReference type="EMBL" id="J03153">
    <property type="protein sequence ID" value="AAB59061.1"/>
    <property type="molecule type" value="Genomic_DNA"/>
</dbReference>
<dbReference type="EMBL" id="U00096">
    <property type="protein sequence ID" value="AAC74260.1"/>
    <property type="molecule type" value="Genomic_DNA"/>
</dbReference>
<dbReference type="EMBL" id="AP009048">
    <property type="protein sequence ID" value="BAA36010.1"/>
    <property type="molecule type" value="Genomic_DNA"/>
</dbReference>
<dbReference type="PIR" id="A31877">
    <property type="entry name" value="CEECIC"/>
</dbReference>
<dbReference type="RefSeq" id="NP_415694.1">
    <property type="nucleotide sequence ID" value="NC_000913.3"/>
</dbReference>
<dbReference type="RefSeq" id="WP_001301105.1">
    <property type="nucleotide sequence ID" value="NZ_SSZK01000010.1"/>
</dbReference>
<dbReference type="PDB" id="5XDM">
    <property type="method" value="X-ray"/>
    <property type="resolution" value="3.00 A"/>
    <property type="chains" value="A/B=121-231"/>
</dbReference>
<dbReference type="PDBsum" id="5XDM"/>
<dbReference type="SMR" id="P18196"/>
<dbReference type="BioGRID" id="4260098">
    <property type="interactions" value="299"/>
</dbReference>
<dbReference type="BioGRID" id="850111">
    <property type="interactions" value="22"/>
</dbReference>
<dbReference type="DIP" id="DIP-10214N"/>
<dbReference type="FunCoup" id="P18196">
    <property type="interactions" value="65"/>
</dbReference>
<dbReference type="IntAct" id="P18196">
    <property type="interactions" value="32"/>
</dbReference>
<dbReference type="MINT" id="P18196"/>
<dbReference type="STRING" id="511145.b1176"/>
<dbReference type="jPOST" id="P18196"/>
<dbReference type="PaxDb" id="511145-b1176"/>
<dbReference type="DNASU" id="945744"/>
<dbReference type="EnsemblBacteria" id="AAC74260">
    <property type="protein sequence ID" value="AAC74260"/>
    <property type="gene ID" value="b1176"/>
</dbReference>
<dbReference type="GeneID" id="945744"/>
<dbReference type="KEGG" id="ecj:JW1165"/>
<dbReference type="KEGG" id="eco:b1176"/>
<dbReference type="KEGG" id="ecoc:C3026_06930"/>
<dbReference type="PATRIC" id="fig|1411691.4.peg.1112"/>
<dbReference type="EchoBASE" id="EB0591"/>
<dbReference type="eggNOG" id="COG0850">
    <property type="taxonomic scope" value="Bacteria"/>
</dbReference>
<dbReference type="HOGENOM" id="CLU_067812_0_1_6"/>
<dbReference type="InParanoid" id="P18196"/>
<dbReference type="OMA" id="RRDPLWG"/>
<dbReference type="OrthoDB" id="9794530at2"/>
<dbReference type="PhylomeDB" id="P18196"/>
<dbReference type="BioCyc" id="EcoCyc:EG10596-MONOMER"/>
<dbReference type="PRO" id="PR:P18196"/>
<dbReference type="Proteomes" id="UP000000625">
    <property type="component" value="Chromosome"/>
</dbReference>
<dbReference type="GO" id="GO:0060187">
    <property type="term" value="C:cell pole"/>
    <property type="evidence" value="ECO:0000314"/>
    <property type="project" value="EcoCyc"/>
</dbReference>
<dbReference type="GO" id="GO:0005829">
    <property type="term" value="C:cytosol"/>
    <property type="evidence" value="ECO:0000314"/>
    <property type="project" value="EcoCyc"/>
</dbReference>
<dbReference type="GO" id="GO:0004857">
    <property type="term" value="F:enzyme inhibitor activity"/>
    <property type="evidence" value="ECO:0000314"/>
    <property type="project" value="EcoCyc"/>
</dbReference>
<dbReference type="GO" id="GO:0042802">
    <property type="term" value="F:identical protein binding"/>
    <property type="evidence" value="ECO:0000314"/>
    <property type="project" value="EcoCyc"/>
</dbReference>
<dbReference type="GO" id="GO:0000902">
    <property type="term" value="P:cell morphogenesis"/>
    <property type="evidence" value="ECO:0007669"/>
    <property type="project" value="InterPro"/>
</dbReference>
<dbReference type="GO" id="GO:0000918">
    <property type="term" value="P:division septum site selection"/>
    <property type="evidence" value="ECO:0000314"/>
    <property type="project" value="EcoCyc"/>
</dbReference>
<dbReference type="GO" id="GO:0051302">
    <property type="term" value="P:regulation of cell division"/>
    <property type="evidence" value="ECO:0007669"/>
    <property type="project" value="InterPro"/>
</dbReference>
<dbReference type="GO" id="GO:1901891">
    <property type="term" value="P:regulation of cell septum assembly"/>
    <property type="evidence" value="ECO:0007669"/>
    <property type="project" value="InterPro"/>
</dbReference>
<dbReference type="FunFam" id="2.160.20.70:FF:000002">
    <property type="entry name" value="Probable septum site-determining protein MinC"/>
    <property type="match status" value="1"/>
</dbReference>
<dbReference type="Gene3D" id="2.160.20.70">
    <property type="match status" value="1"/>
</dbReference>
<dbReference type="Gene3D" id="3.30.70.260">
    <property type="match status" value="1"/>
</dbReference>
<dbReference type="HAMAP" id="MF_00267">
    <property type="entry name" value="MinC"/>
    <property type="match status" value="1"/>
</dbReference>
<dbReference type="InterPro" id="IPR016098">
    <property type="entry name" value="CAP/MinC_C"/>
</dbReference>
<dbReference type="InterPro" id="IPR013033">
    <property type="entry name" value="MinC"/>
</dbReference>
<dbReference type="InterPro" id="IPR036145">
    <property type="entry name" value="MinC_C_sf"/>
</dbReference>
<dbReference type="InterPro" id="IPR007874">
    <property type="entry name" value="MinC_N"/>
</dbReference>
<dbReference type="InterPro" id="IPR005526">
    <property type="entry name" value="Septum_form_inhib_MinC_C"/>
</dbReference>
<dbReference type="NCBIfam" id="TIGR01222">
    <property type="entry name" value="minC"/>
    <property type="match status" value="1"/>
</dbReference>
<dbReference type="PANTHER" id="PTHR34108">
    <property type="entry name" value="SEPTUM SITE-DETERMINING PROTEIN MINC"/>
    <property type="match status" value="1"/>
</dbReference>
<dbReference type="PANTHER" id="PTHR34108:SF1">
    <property type="entry name" value="SEPTUM SITE-DETERMINING PROTEIN MINC"/>
    <property type="match status" value="1"/>
</dbReference>
<dbReference type="Pfam" id="PF03775">
    <property type="entry name" value="MinC_C"/>
    <property type="match status" value="1"/>
</dbReference>
<dbReference type="Pfam" id="PF05209">
    <property type="entry name" value="MinC_N"/>
    <property type="match status" value="1"/>
</dbReference>
<dbReference type="SUPFAM" id="SSF63848">
    <property type="entry name" value="Cell-division inhibitor MinC, C-terminal domain"/>
    <property type="match status" value="1"/>
</dbReference>
<name>MINC_ECOLI</name>
<proteinExistence type="evidence at protein level"/>
<keyword id="KW-0002">3D-structure</keyword>
<keyword id="KW-0131">Cell cycle</keyword>
<keyword id="KW-0132">Cell division</keyword>
<keyword id="KW-1185">Reference proteome</keyword>
<keyword id="KW-0717">Septation</keyword>
<feature type="chain" id="PRO_0000189033" description="Septum site-determining protein MinC">
    <location>
        <begin position="1"/>
        <end position="231"/>
    </location>
</feature>
<feature type="region of interest" description="Disordered" evidence="1">
    <location>
        <begin position="101"/>
        <end position="125"/>
    </location>
</feature>
<feature type="compositionally biased region" description="Low complexity" evidence="1">
    <location>
        <begin position="114"/>
        <end position="123"/>
    </location>
</feature>
<feature type="sequence variant" description="In minC19; reduces affinity of MinC for FtsZ.">
    <original>G</original>
    <variation>D</variation>
    <location>
        <position position="10"/>
    </location>
</feature>
<feature type="strand" evidence="4">
    <location>
        <begin position="126"/>
        <end position="128"/>
    </location>
</feature>
<feature type="strand" evidence="4">
    <location>
        <begin position="137"/>
        <end position="140"/>
    </location>
</feature>
<feature type="strand" evidence="4">
    <location>
        <begin position="145"/>
        <end position="147"/>
    </location>
</feature>
<feature type="strand" evidence="4">
    <location>
        <begin position="156"/>
        <end position="161"/>
    </location>
</feature>
<feature type="strand" evidence="4">
    <location>
        <begin position="163"/>
        <end position="169"/>
    </location>
</feature>
<feature type="strand" evidence="4">
    <location>
        <begin position="171"/>
        <end position="176"/>
    </location>
</feature>
<feature type="strand" evidence="4">
    <location>
        <begin position="184"/>
        <end position="190"/>
    </location>
</feature>
<feature type="strand" evidence="4">
    <location>
        <begin position="193"/>
        <end position="197"/>
    </location>
</feature>
<feature type="strand" evidence="4">
    <location>
        <begin position="200"/>
        <end position="203"/>
    </location>
</feature>
<feature type="turn" evidence="4">
    <location>
        <begin position="204"/>
        <end position="206"/>
    </location>
</feature>
<feature type="helix" evidence="4">
    <location>
        <begin position="209"/>
        <end position="211"/>
    </location>
</feature>
<feature type="strand" evidence="4">
    <location>
        <begin position="216"/>
        <end position="228"/>
    </location>
</feature>
<evidence type="ECO:0000256" key="1">
    <source>
        <dbReference type="SAM" id="MobiDB-lite"/>
    </source>
</evidence>
<evidence type="ECO:0000269" key="2">
    <source>
    </source>
</evidence>
<evidence type="ECO:0000305" key="3"/>
<evidence type="ECO:0007829" key="4">
    <source>
        <dbReference type="PDB" id="5XDM"/>
    </source>
</evidence>